<proteinExistence type="evidence at transcript level"/>
<comment type="function">
    <text>May have an enzymatic role. Found the acrosomal vesicle at the anterior of sperm but not in the acrosomal process.</text>
</comment>
<comment type="tissue specificity">
    <text>Sperm.</text>
</comment>
<dbReference type="EMBL" id="Z47541">
    <property type="protein sequence ID" value="CAA87589.1"/>
    <property type="molecule type" value="mRNA"/>
</dbReference>
<dbReference type="SMR" id="Q25386"/>
<dbReference type="OrthoDB" id="6428058at2759"/>
<dbReference type="Proteomes" id="UP000694941">
    <property type="component" value="Unplaced"/>
</dbReference>
<dbReference type="Gene3D" id="2.120.10.80">
    <property type="entry name" value="Kelch-type beta propeller"/>
    <property type="match status" value="4"/>
</dbReference>
<dbReference type="InterPro" id="IPR015915">
    <property type="entry name" value="Kelch-typ_b-propeller"/>
</dbReference>
<dbReference type="InterPro" id="IPR006652">
    <property type="entry name" value="Kelch_1"/>
</dbReference>
<dbReference type="PANTHER" id="PTHR45632:SF3">
    <property type="entry name" value="KELCH-LIKE PROTEIN 32"/>
    <property type="match status" value="1"/>
</dbReference>
<dbReference type="PANTHER" id="PTHR45632">
    <property type="entry name" value="LD33804P"/>
    <property type="match status" value="1"/>
</dbReference>
<dbReference type="Pfam" id="PF24681">
    <property type="entry name" value="Kelch_KLHDC2_KLHL20_DRC7"/>
    <property type="match status" value="2"/>
</dbReference>
<dbReference type="SMART" id="SM00612">
    <property type="entry name" value="Kelch"/>
    <property type="match status" value="10"/>
</dbReference>
<dbReference type="SUPFAM" id="SSF117281">
    <property type="entry name" value="Kelch motif"/>
    <property type="match status" value="2"/>
</dbReference>
<name>SCRB_LIMPO</name>
<feature type="chain" id="PRO_0000119144" description="Beta-scruin">
    <location>
        <begin position="1"/>
        <end position="916"/>
    </location>
</feature>
<feature type="repeat" description="Kelch 1">
    <location>
        <begin position="82"/>
        <end position="133"/>
    </location>
</feature>
<feature type="repeat" description="Kelch 2">
    <location>
        <begin position="134"/>
        <end position="187"/>
    </location>
</feature>
<feature type="repeat" description="Kelch 3">
    <location>
        <begin position="188"/>
        <end position="235"/>
    </location>
</feature>
<feature type="repeat" description="Kelch 4">
    <location>
        <begin position="237"/>
        <end position="289"/>
    </location>
</feature>
<feature type="repeat" description="Kelch 5">
    <location>
        <begin position="291"/>
        <end position="341"/>
    </location>
</feature>
<feature type="repeat" description="Kelch 6">
    <location>
        <begin position="342"/>
        <end position="390"/>
    </location>
</feature>
<feature type="repeat" description="Kelch 7">
    <location>
        <begin position="586"/>
        <end position="637"/>
    </location>
</feature>
<feature type="repeat" description="Kelch 8">
    <location>
        <begin position="638"/>
        <end position="691"/>
    </location>
</feature>
<feature type="repeat" description="Kelch 9">
    <location>
        <begin position="692"/>
        <end position="739"/>
    </location>
</feature>
<feature type="repeat" description="Kelch 10">
    <location>
        <begin position="741"/>
        <end position="793"/>
    </location>
</feature>
<feature type="repeat" description="Kelch 11">
    <location>
        <begin position="795"/>
        <end position="847"/>
    </location>
</feature>
<feature type="repeat" description="Kelch 12">
    <location>
        <begin position="849"/>
        <end position="896"/>
    </location>
</feature>
<feature type="region of interest" description="Disordered" evidence="1">
    <location>
        <begin position="393"/>
        <end position="426"/>
    </location>
</feature>
<feature type="compositionally biased region" description="Basic and acidic residues" evidence="1">
    <location>
        <begin position="414"/>
        <end position="425"/>
    </location>
</feature>
<protein>
    <recommendedName>
        <fullName>Beta-scruin</fullName>
    </recommendedName>
</protein>
<organism>
    <name type="scientific">Limulus polyphemus</name>
    <name type="common">Atlantic horseshoe crab</name>
    <dbReference type="NCBI Taxonomy" id="6850"/>
    <lineage>
        <taxon>Eukaryota</taxon>
        <taxon>Metazoa</taxon>
        <taxon>Ecdysozoa</taxon>
        <taxon>Arthropoda</taxon>
        <taxon>Chelicerata</taxon>
        <taxon>Merostomata</taxon>
        <taxon>Xiphosura</taxon>
        <taxon>Limulidae</taxon>
        <taxon>Limulus</taxon>
    </lineage>
</organism>
<evidence type="ECO:0000256" key="1">
    <source>
        <dbReference type="SAM" id="MobiDB-lite"/>
    </source>
</evidence>
<accession>Q25386</accession>
<sequence>MARYRQPERLTRTISCSDDYVDLKPVNEQPSDKMDPNLGLIASMPKVDQEDRSDLQRRWRNLTKLKPGLSEVNELDNESTPAVLIFGGINTARPTDYLNSASMFLYHLDRNNWNFYGTMLEPRNYHAAAYFHGKVYLFGGYNPLHCIKGKMQATSTTFQLTLDVKQWRRRADMPSARAHHGVTIMDERIFVFGGKDSNGNIIASVEMYEPELDQWTSLASIPEPLMGSAVTNNEGLIYVVGGLTTKKEKNQEGVLSNKIYCFDPLNNKWYRKPPLPCPRAFASATTQNKKIWIWGGASLSEGGTLASTTSVDIWDPKKGRFEQHLIFDSPKHCLAVTKAGTQVFIIGGMSSKENSSLAEVQVYDRKRDILQKCAFLPVSLTGTAAVGIPVNRSPASDITTSKTTRSGSRKTQKTLKDKQQSDIHARNKAARTIQLNYRKYHASKQRRSGIPRDALRKKINVGEGDRVSGRIRTYITGYRPKAPGDDDLSKDFAPVTIPFWPPDPDTSDSVFHTVVDQFHCAKEKMQFKHFYTIPRQIDPNLGMLLFMDEDYQHSKKVLGLRNVESTPYYMSRFHATGDIQDTSIPVIIAIGGVDPQDPMNVSYGRSVFQYHPLKDRWEFFGFMSLPRNHHAAAYYRGAIYVTGGCDPHIRCWGEMVATKMTFVYRLSSNKWTRVADMHSARSHHSMVVFNDSIYVIGGRDDSGRLSASVESYVPALDEWNQEKPMPLPRMGMAVVSHGGYLWVMGGVTSTKGGNINPPVLDDVICYDPVFKHWVSGKPLRIARAFGSAVVCDDKIWLCGGAAPSQDENNYLVSIPAIDVYDNEALEWIQKATLSCPRHSSVVVALESCLYLIGGINSHELSAINRNELYTTDSDTVQSIRELPVQLTGMAAVTIPPTCVTFRSESLSIMIRHKVVT</sequence>
<reference key="1">
    <citation type="journal article" date="1995" name="J. Cell Sci.">
        <title>Beta-scruin, a homologue of the actin crosslinking protein scruin, is localized to the acrosomal vesicle of Limulus sperm.</title>
        <authorList>
            <person name="Way M."/>
            <person name="Sanders M."/>
            <person name="Chafel M."/>
            <person name="Tu Y.H."/>
            <person name="Knight A."/>
            <person name="Matsudaira P."/>
        </authorList>
    </citation>
    <scope>NUCLEOTIDE SEQUENCE [MRNA]</scope>
    <source>
        <tissue>Testis</tissue>
    </source>
</reference>
<keyword id="KW-0880">Kelch repeat</keyword>
<keyword id="KW-0677">Repeat</keyword>